<proteinExistence type="inferred from homology"/>
<keyword id="KW-1185">Reference proteome</keyword>
<comment type="similarity">
    <text evidence="1">Belongs to the HyuB family.</text>
</comment>
<reference key="1">
    <citation type="journal article" date="1996" name="Science">
        <title>Complete genome sequence of the methanogenic archaeon, Methanococcus jannaschii.</title>
        <authorList>
            <person name="Bult C.J."/>
            <person name="White O."/>
            <person name="Olsen G.J."/>
            <person name="Zhou L."/>
            <person name="Fleischmann R.D."/>
            <person name="Sutton G.G."/>
            <person name="Blake J.A."/>
            <person name="FitzGerald L.M."/>
            <person name="Clayton R.A."/>
            <person name="Gocayne J.D."/>
            <person name="Kerlavage A.R."/>
            <person name="Dougherty B.A."/>
            <person name="Tomb J.-F."/>
            <person name="Adams M.D."/>
            <person name="Reich C.I."/>
            <person name="Overbeek R."/>
            <person name="Kirkness E.F."/>
            <person name="Weinstock K.G."/>
            <person name="Merrick J.M."/>
            <person name="Glodek A."/>
            <person name="Scott J.L."/>
            <person name="Geoghagen N.S.M."/>
            <person name="Weidman J.F."/>
            <person name="Fuhrmann J.L."/>
            <person name="Nguyen D."/>
            <person name="Utterback T.R."/>
            <person name="Kelley J.M."/>
            <person name="Peterson J.D."/>
            <person name="Sadow P.W."/>
            <person name="Hanna M.C."/>
            <person name="Cotton M.D."/>
            <person name="Roberts K.M."/>
            <person name="Hurst M.A."/>
            <person name="Kaine B.P."/>
            <person name="Borodovsky M."/>
            <person name="Klenk H.-P."/>
            <person name="Fraser C.M."/>
            <person name="Smith H.O."/>
            <person name="Woese C.R."/>
            <person name="Venter J.C."/>
        </authorList>
    </citation>
    <scope>NUCLEOTIDE SEQUENCE [LARGE SCALE GENOMIC DNA]</scope>
    <source>
        <strain>ATCC 43067 / DSM 2661 / JAL-1 / JCM 10045 / NBRC 100440</strain>
    </source>
</reference>
<feature type="chain" id="PRO_0000208585" description="Uncharacterized protein MJ0963">
    <location>
        <begin position="1"/>
        <end position="563"/>
    </location>
</feature>
<organism>
    <name type="scientific">Methanocaldococcus jannaschii (strain ATCC 43067 / DSM 2661 / JAL-1 / JCM 10045 / NBRC 100440)</name>
    <name type="common">Methanococcus jannaschii</name>
    <dbReference type="NCBI Taxonomy" id="243232"/>
    <lineage>
        <taxon>Archaea</taxon>
        <taxon>Methanobacteriati</taxon>
        <taxon>Methanobacteriota</taxon>
        <taxon>Methanomada group</taxon>
        <taxon>Methanococci</taxon>
        <taxon>Methanococcales</taxon>
        <taxon>Methanocaldococcaceae</taxon>
        <taxon>Methanocaldococcus</taxon>
    </lineage>
</organism>
<evidence type="ECO:0000305" key="1"/>
<name>Y963_METJA</name>
<accession>Q58373</accession>
<dbReference type="EMBL" id="L77117">
    <property type="protein sequence ID" value="AAB98965.1"/>
    <property type="molecule type" value="Genomic_DNA"/>
</dbReference>
<dbReference type="PIR" id="C64420">
    <property type="entry name" value="C64420"/>
</dbReference>
<dbReference type="RefSeq" id="WP_010870477.1">
    <property type="nucleotide sequence ID" value="NC_000909.1"/>
</dbReference>
<dbReference type="SMR" id="Q58373"/>
<dbReference type="FunCoup" id="Q58373">
    <property type="interactions" value="2"/>
</dbReference>
<dbReference type="STRING" id="243232.MJ_0963"/>
<dbReference type="PaxDb" id="243232-MJ_0963"/>
<dbReference type="EnsemblBacteria" id="AAB98965">
    <property type="protein sequence ID" value="AAB98965"/>
    <property type="gene ID" value="MJ_0963"/>
</dbReference>
<dbReference type="GeneID" id="1451861"/>
<dbReference type="KEGG" id="mja:MJ_0963"/>
<dbReference type="eggNOG" id="arCOG01512">
    <property type="taxonomic scope" value="Archaea"/>
</dbReference>
<dbReference type="HOGENOM" id="CLU_020413_0_0_2"/>
<dbReference type="InParanoid" id="Q58373"/>
<dbReference type="OrthoDB" id="8261at2157"/>
<dbReference type="PhylomeDB" id="Q58373"/>
<dbReference type="Proteomes" id="UP000000805">
    <property type="component" value="Chromosome"/>
</dbReference>
<dbReference type="GO" id="GO:0016787">
    <property type="term" value="F:hydrolase activity"/>
    <property type="evidence" value="ECO:0007669"/>
    <property type="project" value="InterPro"/>
</dbReference>
<dbReference type="InterPro" id="IPR003692">
    <property type="entry name" value="Hydantoinase_B"/>
</dbReference>
<dbReference type="InterPro" id="IPR045079">
    <property type="entry name" value="Oxoprolinase-like"/>
</dbReference>
<dbReference type="PANTHER" id="PTHR11365">
    <property type="entry name" value="5-OXOPROLINASE RELATED"/>
    <property type="match status" value="1"/>
</dbReference>
<dbReference type="PANTHER" id="PTHR11365:SF23">
    <property type="entry name" value="HYPOTHETICAL 5-OXOPROLINASE (EUROFUNG)-RELATED"/>
    <property type="match status" value="1"/>
</dbReference>
<dbReference type="Pfam" id="PF02538">
    <property type="entry name" value="Hydantoinase_B"/>
    <property type="match status" value="1"/>
</dbReference>
<protein>
    <recommendedName>
        <fullName>Uncharacterized protein MJ0963</fullName>
    </recommendedName>
</protein>
<gene>
    <name type="ordered locus">MJ0963</name>
</gene>
<sequence>MDKITVEVIKSSTSYIAEEMGIILRNTAYSPNIKDRLDFSCAILSSNGELIAQAEHIPVHLGSMAIGVKNTVDYLKKESIEIEKDDVIIVNDPYIAGTHLNDITLLKPIFYNDEIIGYVANKAHHVDVGGYAPGSISSNVKELYHEGLIIPPSKLVINGKLNKELLNLITSNVRVPKSTIGDLKAQIASLNIGVERILKLIEKYGDREVTEAWNKSLDYSEEYLKSKIRDINCICEAVDYLEYKDKLININMKIEIKNGKIKVDFTGTHRQLDAPLNAVYGVTVASTSFALKAVIDPDLPMNHGIFRVLNIIAPEETIVNPKKPAPVSVGNVETSQRIVDVIFKALYHEFPDRVPAASNGSMNNVIIGGRGWAFYETIGGGFGGRNGKDGVDGVHANMTNTLNTPIEVIENEYPIMILEYSLREDSGGAGKYRGGLGIRRVYKMLSDCMLSIIADRIKISPWGVNNGYSGACGEHYVIKDGKKIPLSGKDTLYLSCGDIVEINTPGGGGYGSPYERDINLILEDVKDEKISIKSAYRDYKVKIIKKDDDFVVDMEETKKLRGL</sequence>